<sequence length="409" mass="45895">MAMRWSCWRRGCSWRPTAVGSPRRERPGCVEPLGTRAASDTRAQIPYFSLMKILMSASPTMHSISQFHQRTPAMCSCRQTQSGEKYSDPFKLGWRDLKGLYEDIRKELHISTRELKDMSEYYFDGKGKAFRPIIVVLMARACNIHHNNAREMQASQRSIALVAEMIHTATLVHDDVIDDASSRRGKHTVNKIWGEKKAVLAGDLILSAASVALARIGNTAVVSMLAQVIEDLVRGEFLQLGSKENENERFAHYLEKTFKKTASLIANSCKAVSVLGCPDPVVHEIAYQYGKNVGIAFQLIDDVLDFTSCSDQMGKPTSADLKLGIATGPVLFACQQFPEMNAMIMRRFSLPGDVDRARQYVLQSDGVQQTTYLAQQYCHKAVREIRKLRPSTERDALIQLSESVLTRDK</sequence>
<name>DPS1_MOUSE</name>
<protein>
    <recommendedName>
        <fullName evidence="6">All trans-polyprenyl-diphosphate synthase PDSS1</fullName>
    </recommendedName>
    <alternativeName>
        <fullName evidence="3">All-trans-decaprenyl-diphosphate synthase subunit 1</fullName>
        <ecNumber evidence="3">2.5.1.91</ecNumber>
    </alternativeName>
    <alternativeName>
        <fullName evidence="8">Decaprenyl-diphosphate synthase subunit 1</fullName>
    </alternativeName>
    <alternativeName>
        <fullName>Solanesyl-diphosphate synthase subunit 1</fullName>
    </alternativeName>
    <alternativeName>
        <fullName>Trans-prenyltransferase 1</fullName>
        <shortName>TPT 1</shortName>
    </alternativeName>
</protein>
<keyword id="KW-0414">Isoprene biosynthesis</keyword>
<keyword id="KW-0443">Lipid metabolism</keyword>
<keyword id="KW-0460">Magnesium</keyword>
<keyword id="KW-0479">Metal-binding</keyword>
<keyword id="KW-0496">Mitochondrion</keyword>
<keyword id="KW-1185">Reference proteome</keyword>
<keyword id="KW-0808">Transferase</keyword>
<keyword id="KW-0831">Ubiquinone biosynthesis</keyword>
<evidence type="ECO:0000250" key="1">
    <source>
        <dbReference type="UniProtKB" id="P14324"/>
    </source>
</evidence>
<evidence type="ECO:0000250" key="2">
    <source>
        <dbReference type="UniProtKB" id="Q12051"/>
    </source>
</evidence>
<evidence type="ECO:0000250" key="3">
    <source>
        <dbReference type="UniProtKB" id="Q5T2R2"/>
    </source>
</evidence>
<evidence type="ECO:0000269" key="4">
    <source>
    </source>
</evidence>
<evidence type="ECO:0000303" key="5">
    <source>
    </source>
</evidence>
<evidence type="ECO:0000305" key="6"/>
<evidence type="ECO:0000305" key="7">
    <source>
    </source>
</evidence>
<evidence type="ECO:0000312" key="8">
    <source>
        <dbReference type="MGI" id="MGI:1889278"/>
    </source>
</evidence>
<reference key="1">
    <citation type="journal article" date="2005" name="FEBS J.">
        <title>Characterization of solanesyl and decaprenyl diphosphate synthases in mice and humans.</title>
        <authorList>
            <person name="Saiki R."/>
            <person name="Nagata A."/>
            <person name="Kainou T."/>
            <person name="Matsuda H."/>
            <person name="Kawamukai M."/>
        </authorList>
    </citation>
    <scope>NUCLEOTIDE SEQUENCE [MRNA]</scope>
    <scope>FUNCTION</scope>
    <scope>CATALYTIC ACTIVITY</scope>
    <scope>SUBUNIT</scope>
</reference>
<reference key="2">
    <citation type="journal article" date="2009" name="PLoS Biol.">
        <title>Lineage-specific biology revealed by a finished genome assembly of the mouse.</title>
        <authorList>
            <person name="Church D.M."/>
            <person name="Goodstadt L."/>
            <person name="Hillier L.W."/>
            <person name="Zody M.C."/>
            <person name="Goldstein S."/>
            <person name="She X."/>
            <person name="Bult C.J."/>
            <person name="Agarwala R."/>
            <person name="Cherry J.L."/>
            <person name="DiCuccio M."/>
            <person name="Hlavina W."/>
            <person name="Kapustin Y."/>
            <person name="Meric P."/>
            <person name="Maglott D."/>
            <person name="Birtle Z."/>
            <person name="Marques A.C."/>
            <person name="Graves T."/>
            <person name="Zhou S."/>
            <person name="Teague B."/>
            <person name="Potamousis K."/>
            <person name="Churas C."/>
            <person name="Place M."/>
            <person name="Herschleb J."/>
            <person name="Runnheim R."/>
            <person name="Forrest D."/>
            <person name="Amos-Landgraf J."/>
            <person name="Schwartz D.C."/>
            <person name="Cheng Z."/>
            <person name="Lindblad-Toh K."/>
            <person name="Eichler E.E."/>
            <person name="Ponting C.P."/>
        </authorList>
    </citation>
    <scope>NUCLEOTIDE SEQUENCE [LARGE SCALE GENOMIC DNA]</scope>
    <source>
        <strain>C57BL/6J</strain>
    </source>
</reference>
<reference key="3">
    <citation type="journal article" date="2004" name="Genome Res.">
        <title>The status, quality, and expansion of the NIH full-length cDNA project: the Mammalian Gene Collection (MGC).</title>
        <authorList>
            <consortium name="The MGC Project Team"/>
        </authorList>
    </citation>
    <scope>NUCLEOTIDE SEQUENCE [LARGE SCALE MRNA]</scope>
    <source>
        <strain>C57BL/6J</strain>
        <strain>FVB/N</strain>
        <tissue>Mammary tumor</tissue>
    </source>
</reference>
<reference key="4">
    <citation type="journal article" date="2000" name="Lancet">
        <title>Quinone-responsive multiple respiratory-chain dysfunction due to widespread coenzyme Q10 deficiency.</title>
        <authorList>
            <person name="Roetig A."/>
            <person name="Appelkvist E.-L."/>
            <person name="Geromel V."/>
            <person name="Chretien D."/>
            <person name="Kadhom N."/>
            <person name="Edery P."/>
            <person name="Lebideau M."/>
            <person name="Dallner G."/>
            <person name="Munnich A."/>
            <person name="Ernster L."/>
            <person name="Rustin P."/>
        </authorList>
    </citation>
    <scope>NUCLEOTIDE SEQUENCE [MRNA] OF 67-409</scope>
</reference>
<comment type="function">
    <text evidence="4">Heterotetrameric enzyme that catalyzes the condensation of farnesyl diphosphate (FPP), which acts as a primer, and isopentenyl diphosphate (IPP) to produce prenyl diphosphates of varying chain lengths and participates in the determination of the side chain of ubiquinone (PubMed:16262699). Supplies nona and decaprenyl diphosphate, the precursors for the side chain of the isoprenoid quinones ubiquinone-9 (Q9)and ubiquinone-10 (Q10) respectively (PubMed:16262699). The enzyme adds isopentenyl diphosphate molecules sequentially to farnesyl diphosphate with trans stereochemistry (PubMed:16262699).</text>
</comment>
<comment type="catalytic activity">
    <reaction evidence="3">
        <text>7 isopentenyl diphosphate + (2E,6E)-farnesyl diphosphate = all-trans-decaprenyl diphosphate + 7 diphosphate</text>
        <dbReference type="Rhea" id="RHEA:27802"/>
        <dbReference type="ChEBI" id="CHEBI:33019"/>
        <dbReference type="ChEBI" id="CHEBI:60721"/>
        <dbReference type="ChEBI" id="CHEBI:128769"/>
        <dbReference type="ChEBI" id="CHEBI:175763"/>
        <dbReference type="EC" id="2.5.1.91"/>
    </reaction>
    <physiologicalReaction direction="left-to-right" evidence="3">
        <dbReference type="Rhea" id="RHEA:27803"/>
    </physiologicalReaction>
</comment>
<comment type="catalytic activity">
    <reaction evidence="4">
        <text>6 isopentenyl diphosphate + (2E,6E)-farnesyl diphosphate = all-trans-nonaprenyl diphosphate + 6 diphosphate</text>
        <dbReference type="Rhea" id="RHEA:55364"/>
        <dbReference type="ChEBI" id="CHEBI:33019"/>
        <dbReference type="ChEBI" id="CHEBI:58391"/>
        <dbReference type="ChEBI" id="CHEBI:128769"/>
        <dbReference type="ChEBI" id="CHEBI:175763"/>
    </reaction>
    <physiologicalReaction direction="left-to-right" evidence="7">
        <dbReference type="Rhea" id="RHEA:55365"/>
    </physiologicalReaction>
</comment>
<comment type="cofactor">
    <cofactor evidence="1">
        <name>Mg(2+)</name>
        <dbReference type="ChEBI" id="CHEBI:18420"/>
    </cofactor>
    <text evidence="1">Binds 2 Mg(2+) ions per subunit.</text>
</comment>
<comment type="pathway">
    <text>Cofactor biosynthesis; ubiquinone biosynthesis.</text>
</comment>
<comment type="subunit">
    <text evidence="4">Heterotetramer composed of 2 PDSS1/DPS1 and 2 PDSS2/DLP1 subunits.</text>
</comment>
<comment type="subcellular location">
    <subcellularLocation>
        <location evidence="3">Mitochondrion</location>
    </subcellularLocation>
</comment>
<comment type="similarity">
    <text evidence="6">Belongs to the FPP/GGPP synthase family.</text>
</comment>
<comment type="sequence caution" evidence="6">
    <conflict type="erroneous initiation">
        <sequence resource="EMBL-CDS" id="AAD24462"/>
    </conflict>
</comment>
<comment type="sequence caution" evidence="6">
    <conflict type="erroneous initiation">
        <sequence resource="EMBL-CDS" id="AAH26820"/>
    </conflict>
</comment>
<dbReference type="EC" id="2.5.1.91" evidence="3"/>
<dbReference type="EMBL" id="AB210841">
    <property type="protein sequence ID" value="BAE48219.1"/>
    <property type="molecule type" value="mRNA"/>
</dbReference>
<dbReference type="EMBL" id="CT030013">
    <property type="status" value="NOT_ANNOTATED_CDS"/>
    <property type="molecule type" value="Genomic_DNA"/>
</dbReference>
<dbReference type="EMBL" id="BC026820">
    <property type="protein sequence ID" value="AAH26820.1"/>
    <property type="status" value="ALT_INIT"/>
    <property type="molecule type" value="mRNA"/>
</dbReference>
<dbReference type="EMBL" id="BC107273">
    <property type="protein sequence ID" value="AAI07274.2"/>
    <property type="molecule type" value="mRNA"/>
</dbReference>
<dbReference type="EMBL" id="BC107274">
    <property type="protein sequence ID" value="AAI07275.2"/>
    <property type="molecule type" value="mRNA"/>
</dbReference>
<dbReference type="EMBL" id="AF118855">
    <property type="protein sequence ID" value="AAD24462.1"/>
    <property type="status" value="ALT_INIT"/>
    <property type="molecule type" value="mRNA"/>
</dbReference>
<dbReference type="CCDS" id="CCDS38057.1"/>
<dbReference type="RefSeq" id="NP_062374.2">
    <property type="nucleotide sequence ID" value="NM_019501.4"/>
</dbReference>
<dbReference type="SMR" id="Q33DR2"/>
<dbReference type="BioGRID" id="207803">
    <property type="interactions" value="5"/>
</dbReference>
<dbReference type="FunCoup" id="Q33DR2">
    <property type="interactions" value="916"/>
</dbReference>
<dbReference type="STRING" id="10090.ENSMUSP00000055689"/>
<dbReference type="iPTMnet" id="Q33DR2"/>
<dbReference type="PhosphoSitePlus" id="Q33DR2"/>
<dbReference type="SwissPalm" id="Q33DR2"/>
<dbReference type="PaxDb" id="10090-ENSMUSP00000055689"/>
<dbReference type="PeptideAtlas" id="Q33DR2"/>
<dbReference type="ProteomicsDB" id="277605"/>
<dbReference type="Pumba" id="Q33DR2"/>
<dbReference type="Antibodypedia" id="25917">
    <property type="antibodies" value="55 antibodies from 17 providers"/>
</dbReference>
<dbReference type="DNASU" id="56075"/>
<dbReference type="Ensembl" id="ENSMUST00000053729.14">
    <property type="protein sequence ID" value="ENSMUSP00000055689.8"/>
    <property type="gene ID" value="ENSMUSG00000026784.15"/>
</dbReference>
<dbReference type="GeneID" id="56075"/>
<dbReference type="KEGG" id="mmu:56075"/>
<dbReference type="UCSC" id="uc008inq.1">
    <property type="organism name" value="mouse"/>
</dbReference>
<dbReference type="AGR" id="MGI:1889278"/>
<dbReference type="CTD" id="23590"/>
<dbReference type="MGI" id="MGI:1889278">
    <property type="gene designation" value="Pdss1"/>
</dbReference>
<dbReference type="VEuPathDB" id="HostDB:ENSMUSG00000026784"/>
<dbReference type="eggNOG" id="KOG0776">
    <property type="taxonomic scope" value="Eukaryota"/>
</dbReference>
<dbReference type="GeneTree" id="ENSGT00940000153498"/>
<dbReference type="HOGENOM" id="CLU_014015_1_2_1"/>
<dbReference type="InParanoid" id="Q33DR2"/>
<dbReference type="OMA" id="GKQMRPM"/>
<dbReference type="OrthoDB" id="27958at9989"/>
<dbReference type="PhylomeDB" id="Q33DR2"/>
<dbReference type="TreeFam" id="TF313548"/>
<dbReference type="Reactome" id="R-MMU-2142789">
    <property type="pathway name" value="Ubiquinol biosynthesis"/>
</dbReference>
<dbReference type="UniPathway" id="UPA00232"/>
<dbReference type="BioGRID-ORCS" id="56075">
    <property type="hits" value="17 hits in 78 CRISPR screens"/>
</dbReference>
<dbReference type="ChiTaRS" id="Pdss1">
    <property type="organism name" value="mouse"/>
</dbReference>
<dbReference type="PRO" id="PR:Q33DR2"/>
<dbReference type="Proteomes" id="UP000000589">
    <property type="component" value="Chromosome 2"/>
</dbReference>
<dbReference type="RNAct" id="Q33DR2">
    <property type="molecule type" value="protein"/>
</dbReference>
<dbReference type="Bgee" id="ENSMUSG00000026784">
    <property type="expression patterns" value="Expressed in paneth cell and 235 other cell types or tissues"/>
</dbReference>
<dbReference type="ExpressionAtlas" id="Q33DR2">
    <property type="expression patterns" value="baseline and differential"/>
</dbReference>
<dbReference type="GO" id="GO:0032478">
    <property type="term" value="C:heterotetrameric polyprenyl diphosphate synthase complex"/>
    <property type="evidence" value="ECO:0000314"/>
    <property type="project" value="BHF-UCL"/>
</dbReference>
<dbReference type="GO" id="GO:0005739">
    <property type="term" value="C:mitochondrion"/>
    <property type="evidence" value="ECO:0007005"/>
    <property type="project" value="MGI"/>
</dbReference>
<dbReference type="GO" id="GO:1990234">
    <property type="term" value="C:transferase complex"/>
    <property type="evidence" value="ECO:0000316"/>
    <property type="project" value="MGI"/>
</dbReference>
<dbReference type="GO" id="GO:0110142">
    <property type="term" value="C:ubiquinone biosynthesis complex"/>
    <property type="evidence" value="ECO:0000316"/>
    <property type="project" value="MGI"/>
</dbReference>
<dbReference type="GO" id="GO:0097269">
    <property type="term" value="F:all-trans-decaprenyl-diphosphate synthase activity"/>
    <property type="evidence" value="ECO:0007669"/>
    <property type="project" value="UniProtKB-EC"/>
</dbReference>
<dbReference type="GO" id="GO:0046872">
    <property type="term" value="F:metal ion binding"/>
    <property type="evidence" value="ECO:0007669"/>
    <property type="project" value="UniProtKB-KW"/>
</dbReference>
<dbReference type="GO" id="GO:0046982">
    <property type="term" value="F:protein heterodimerization activity"/>
    <property type="evidence" value="ECO:0000314"/>
    <property type="project" value="HGNC-UCL"/>
</dbReference>
<dbReference type="GO" id="GO:0008299">
    <property type="term" value="P:isoprenoid biosynthetic process"/>
    <property type="evidence" value="ECO:0000314"/>
    <property type="project" value="HGNC-UCL"/>
</dbReference>
<dbReference type="GO" id="GO:0006744">
    <property type="term" value="P:ubiquinone biosynthetic process"/>
    <property type="evidence" value="ECO:0000314"/>
    <property type="project" value="HGNC-UCL"/>
</dbReference>
<dbReference type="CDD" id="cd00685">
    <property type="entry name" value="Trans_IPPS_HT"/>
    <property type="match status" value="1"/>
</dbReference>
<dbReference type="FunFam" id="1.10.600.10:FF:000011">
    <property type="entry name" value="Decaprenyl diphosphate synthase subunit 1"/>
    <property type="match status" value="1"/>
</dbReference>
<dbReference type="Gene3D" id="1.10.600.10">
    <property type="entry name" value="Farnesyl Diphosphate Synthase"/>
    <property type="match status" value="1"/>
</dbReference>
<dbReference type="InterPro" id="IPR008949">
    <property type="entry name" value="Isoprenoid_synthase_dom_sf"/>
</dbReference>
<dbReference type="InterPro" id="IPR000092">
    <property type="entry name" value="Polyprenyl_synt"/>
</dbReference>
<dbReference type="InterPro" id="IPR033749">
    <property type="entry name" value="Polyprenyl_synt_CS"/>
</dbReference>
<dbReference type="PANTHER" id="PTHR12001:SF69">
    <property type="entry name" value="ALL TRANS-POLYPRENYL-DIPHOSPHATE SYNTHASE PDSS1"/>
    <property type="match status" value="1"/>
</dbReference>
<dbReference type="PANTHER" id="PTHR12001">
    <property type="entry name" value="GERANYLGERANYL PYROPHOSPHATE SYNTHASE"/>
    <property type="match status" value="1"/>
</dbReference>
<dbReference type="Pfam" id="PF00348">
    <property type="entry name" value="polyprenyl_synt"/>
    <property type="match status" value="1"/>
</dbReference>
<dbReference type="SFLD" id="SFLDS00005">
    <property type="entry name" value="Isoprenoid_Synthase_Type_I"/>
    <property type="match status" value="1"/>
</dbReference>
<dbReference type="SUPFAM" id="SSF48576">
    <property type="entry name" value="Terpenoid synthases"/>
    <property type="match status" value="1"/>
</dbReference>
<dbReference type="PROSITE" id="PS00723">
    <property type="entry name" value="POLYPRENYL_SYNTHASE_1"/>
    <property type="match status" value="1"/>
</dbReference>
<dbReference type="PROSITE" id="PS00444">
    <property type="entry name" value="POLYPRENYL_SYNTHASE_2"/>
    <property type="match status" value="1"/>
</dbReference>
<gene>
    <name evidence="8" type="primary">Pdss1</name>
    <name type="synonym">Dps1</name>
    <name evidence="5" type="synonym">Sps1</name>
    <name type="synonym">Tprt</name>
</gene>
<accession>Q33DR2</accession>
<accession>B8JJW9</accession>
<accession>Q9WU69</accession>
<feature type="chain" id="PRO_0000123976" description="All trans-polyprenyl-diphosphate synthase PDSS1">
    <location>
        <begin position="1"/>
        <end position="409"/>
    </location>
</feature>
<feature type="binding site" evidence="1">
    <location>
        <position position="128"/>
    </location>
    <ligand>
        <name>isopentenyl diphosphate</name>
        <dbReference type="ChEBI" id="CHEBI:128769"/>
    </ligand>
</feature>
<feature type="binding site" evidence="1">
    <location>
        <position position="131"/>
    </location>
    <ligand>
        <name>isopentenyl diphosphate</name>
        <dbReference type="ChEBI" id="CHEBI:128769"/>
    </ligand>
</feature>
<feature type="binding site" evidence="2">
    <location>
        <position position="167"/>
    </location>
    <ligand>
        <name>isopentenyl diphosphate</name>
        <dbReference type="ChEBI" id="CHEBI:128769"/>
    </ligand>
</feature>
<feature type="binding site" evidence="1">
    <location>
        <position position="174"/>
    </location>
    <ligand>
        <name>Mg(2+)</name>
        <dbReference type="ChEBI" id="CHEBI:18420"/>
        <label>1</label>
    </ligand>
</feature>
<feature type="binding site" evidence="1">
    <location>
        <position position="174"/>
    </location>
    <ligand>
        <name>Mg(2+)</name>
        <dbReference type="ChEBI" id="CHEBI:18420"/>
        <label>2</label>
    </ligand>
</feature>
<feature type="binding site" evidence="1">
    <location>
        <position position="178"/>
    </location>
    <ligand>
        <name>Mg(2+)</name>
        <dbReference type="ChEBI" id="CHEBI:18420"/>
        <label>1</label>
    </ligand>
</feature>
<feature type="binding site" evidence="1">
    <location>
        <position position="178"/>
    </location>
    <ligand>
        <name>Mg(2+)</name>
        <dbReference type="ChEBI" id="CHEBI:18420"/>
        <label>2</label>
    </ligand>
</feature>
<feature type="binding site" evidence="1">
    <location>
        <position position="184"/>
    </location>
    <ligand>
        <name>isopentenyl diphosphate</name>
        <dbReference type="ChEBI" id="CHEBI:128769"/>
    </ligand>
</feature>
<feature type="sequence conflict" description="In Ref. 3; AAH26820." evidence="6" ref="3">
    <original>M</original>
    <variation>V</variation>
    <location>
        <position position="1"/>
    </location>
</feature>
<organism>
    <name type="scientific">Mus musculus</name>
    <name type="common">Mouse</name>
    <dbReference type="NCBI Taxonomy" id="10090"/>
    <lineage>
        <taxon>Eukaryota</taxon>
        <taxon>Metazoa</taxon>
        <taxon>Chordata</taxon>
        <taxon>Craniata</taxon>
        <taxon>Vertebrata</taxon>
        <taxon>Euteleostomi</taxon>
        <taxon>Mammalia</taxon>
        <taxon>Eutheria</taxon>
        <taxon>Euarchontoglires</taxon>
        <taxon>Glires</taxon>
        <taxon>Rodentia</taxon>
        <taxon>Myomorpha</taxon>
        <taxon>Muroidea</taxon>
        <taxon>Muridae</taxon>
        <taxon>Murinae</taxon>
        <taxon>Mus</taxon>
        <taxon>Mus</taxon>
    </lineage>
</organism>
<proteinExistence type="evidence at protein level"/>